<name>RK14_PHAAO</name>
<feature type="chain" id="PRO_0000276359" description="Large ribosomal subunit protein uL14c">
    <location>
        <begin position="1"/>
        <end position="122"/>
    </location>
</feature>
<evidence type="ECO:0000255" key="1">
    <source>
        <dbReference type="HAMAP-Rule" id="MF_01367"/>
    </source>
</evidence>
<evidence type="ECO:0000305" key="2"/>
<protein>
    <recommendedName>
        <fullName evidence="1">Large ribosomal subunit protein uL14c</fullName>
    </recommendedName>
    <alternativeName>
        <fullName evidence="2">50S ribosomal protein L14, chloroplastic</fullName>
    </alternativeName>
</protein>
<dbReference type="EMBL" id="AY916449">
    <property type="protein sequence ID" value="AAW82536.1"/>
    <property type="molecule type" value="Genomic_DNA"/>
</dbReference>
<dbReference type="RefSeq" id="YP_358618.1">
    <property type="nucleotide sequence ID" value="NC_007499.1"/>
</dbReference>
<dbReference type="SMR" id="Q3BAK0"/>
<dbReference type="GeneID" id="3741717"/>
<dbReference type="GO" id="GO:0009507">
    <property type="term" value="C:chloroplast"/>
    <property type="evidence" value="ECO:0007669"/>
    <property type="project" value="UniProtKB-SubCell"/>
</dbReference>
<dbReference type="GO" id="GO:0022625">
    <property type="term" value="C:cytosolic large ribosomal subunit"/>
    <property type="evidence" value="ECO:0007669"/>
    <property type="project" value="TreeGrafter"/>
</dbReference>
<dbReference type="GO" id="GO:0070180">
    <property type="term" value="F:large ribosomal subunit rRNA binding"/>
    <property type="evidence" value="ECO:0007669"/>
    <property type="project" value="TreeGrafter"/>
</dbReference>
<dbReference type="GO" id="GO:0003735">
    <property type="term" value="F:structural constituent of ribosome"/>
    <property type="evidence" value="ECO:0007669"/>
    <property type="project" value="InterPro"/>
</dbReference>
<dbReference type="GO" id="GO:0006412">
    <property type="term" value="P:translation"/>
    <property type="evidence" value="ECO:0007669"/>
    <property type="project" value="UniProtKB-UniRule"/>
</dbReference>
<dbReference type="CDD" id="cd00337">
    <property type="entry name" value="Ribosomal_uL14"/>
    <property type="match status" value="1"/>
</dbReference>
<dbReference type="FunFam" id="2.40.150.20:FF:000002">
    <property type="entry name" value="50S ribosomal protein L14, chloroplastic"/>
    <property type="match status" value="1"/>
</dbReference>
<dbReference type="Gene3D" id="2.40.150.20">
    <property type="entry name" value="Ribosomal protein L14"/>
    <property type="match status" value="1"/>
</dbReference>
<dbReference type="HAMAP" id="MF_01367">
    <property type="entry name" value="Ribosomal_uL14"/>
    <property type="match status" value="1"/>
</dbReference>
<dbReference type="InterPro" id="IPR000218">
    <property type="entry name" value="Ribosomal_uL14"/>
</dbReference>
<dbReference type="InterPro" id="IPR005745">
    <property type="entry name" value="Ribosomal_uL14_bac-type"/>
</dbReference>
<dbReference type="InterPro" id="IPR019972">
    <property type="entry name" value="Ribosomal_uL14_CS"/>
</dbReference>
<dbReference type="InterPro" id="IPR036853">
    <property type="entry name" value="Ribosomal_uL14_sf"/>
</dbReference>
<dbReference type="NCBIfam" id="TIGR01067">
    <property type="entry name" value="rplN_bact"/>
    <property type="match status" value="1"/>
</dbReference>
<dbReference type="PANTHER" id="PTHR11761">
    <property type="entry name" value="50S/60S RIBOSOMAL PROTEIN L14/L23"/>
    <property type="match status" value="1"/>
</dbReference>
<dbReference type="PANTHER" id="PTHR11761:SF3">
    <property type="entry name" value="LARGE RIBOSOMAL SUBUNIT PROTEIN UL14M"/>
    <property type="match status" value="1"/>
</dbReference>
<dbReference type="Pfam" id="PF00238">
    <property type="entry name" value="Ribosomal_L14"/>
    <property type="match status" value="1"/>
</dbReference>
<dbReference type="SMART" id="SM01374">
    <property type="entry name" value="Ribosomal_L14"/>
    <property type="match status" value="1"/>
</dbReference>
<dbReference type="SUPFAM" id="SSF50193">
    <property type="entry name" value="Ribosomal protein L14"/>
    <property type="match status" value="1"/>
</dbReference>
<dbReference type="PROSITE" id="PS00049">
    <property type="entry name" value="RIBOSOMAL_L14"/>
    <property type="match status" value="1"/>
</dbReference>
<organism>
    <name type="scientific">Phalaenopsis aphrodite subsp. formosana</name>
    <name type="common">Moth orchid</name>
    <dbReference type="NCBI Taxonomy" id="308872"/>
    <lineage>
        <taxon>Eukaryota</taxon>
        <taxon>Viridiplantae</taxon>
        <taxon>Streptophyta</taxon>
        <taxon>Embryophyta</taxon>
        <taxon>Tracheophyta</taxon>
        <taxon>Spermatophyta</taxon>
        <taxon>Magnoliopsida</taxon>
        <taxon>Liliopsida</taxon>
        <taxon>Asparagales</taxon>
        <taxon>Orchidaceae</taxon>
        <taxon>Epidendroideae</taxon>
        <taxon>Vandeae</taxon>
        <taxon>Aeridinae</taxon>
        <taxon>Phalaenopsis</taxon>
    </lineage>
</organism>
<proteinExistence type="inferred from homology"/>
<keyword id="KW-0150">Chloroplast</keyword>
<keyword id="KW-0934">Plastid</keyword>
<keyword id="KW-0687">Ribonucleoprotein</keyword>
<keyword id="KW-0689">Ribosomal protein</keyword>
<keyword id="KW-0694">RNA-binding</keyword>
<keyword id="KW-0699">rRNA-binding</keyword>
<gene>
    <name evidence="1" type="primary">rpl14</name>
</gene>
<accession>Q3BAK0</accession>
<geneLocation type="chloroplast"/>
<comment type="function">
    <text evidence="1">Binds to 23S rRNA.</text>
</comment>
<comment type="subunit">
    <text evidence="1">Part of the 50S ribosomal subunit.</text>
</comment>
<comment type="subcellular location">
    <subcellularLocation>
        <location>Plastid</location>
        <location>Chloroplast</location>
    </subcellularLocation>
</comment>
<comment type="similarity">
    <text evidence="1">Belongs to the universal ribosomal protein uL14 family.</text>
</comment>
<sequence>MIQPQTLLNVADNSGAQKLMCIRIIGTGNHRYAHLGDVIVAVIKEAVPNMPLERSEIIRAVIVRTCKELKRDNGMIIRYDDNAAVIIDQEGNPKGTRIFGAIARELRQLNFTKIVSLAPEVL</sequence>
<reference key="1">
    <citation type="journal article" date="2006" name="Mol. Biol. Evol.">
        <title>The chloroplast genome of Phalaenopsis aphrodite (Orchidaceae): comparative analysis of evolutionary rate with that of grasses and its phylogenetic implications.</title>
        <authorList>
            <person name="Chang C.-C."/>
            <person name="Lin H.-C."/>
            <person name="Lin I.-P."/>
            <person name="Chow T.-Y."/>
            <person name="Chen H.-H."/>
            <person name="Chen W.-H."/>
            <person name="Cheng C.-H."/>
            <person name="Lin C.-Y."/>
            <person name="Liu S.-M."/>
            <person name="Chang C.-C."/>
            <person name="Chaw S.-M."/>
        </authorList>
    </citation>
    <scope>NUCLEOTIDE SEQUENCE [LARGE SCALE GENOMIC DNA]</scope>
    <source>
        <strain>cv. Taisugar TS-97</strain>
    </source>
</reference>